<protein>
    <recommendedName>
        <fullName>Sucrose transport protein SUT4</fullName>
    </recommendedName>
    <alternativeName>
        <fullName>Sucrose permease 4</fullName>
    </alternativeName>
    <alternativeName>
        <fullName>Sucrose transporter 4</fullName>
        <shortName>OsSUT4</shortName>
    </alternativeName>
    <alternativeName>
        <fullName>Sucrose-proton symporter 4</fullName>
    </alternativeName>
</protein>
<accession>B8AF63</accession>
<dbReference type="EMBL" id="CM000127">
    <property type="protein sequence ID" value="EEC74284.1"/>
    <property type="molecule type" value="Genomic_DNA"/>
</dbReference>
<dbReference type="SMR" id="B8AF63"/>
<dbReference type="STRING" id="39946.B8AF63"/>
<dbReference type="GlyCosmos" id="B8AF63">
    <property type="glycosylation" value="2 sites, No reported glycans"/>
</dbReference>
<dbReference type="iPTMnet" id="B8AF63"/>
<dbReference type="EnsemblPlants" id="BGIOSGA009335-TA">
    <property type="protein sequence ID" value="BGIOSGA009335-PA"/>
    <property type="gene ID" value="BGIOSGA009335"/>
</dbReference>
<dbReference type="EnsemblPlants" id="OsGoSa_02g0039070.01">
    <property type="protein sequence ID" value="OsGoSa_02g0039070.01"/>
    <property type="gene ID" value="OsGoSa_02g0039070"/>
</dbReference>
<dbReference type="EnsemblPlants" id="OsIR64_02g0038730.01">
    <property type="protein sequence ID" value="OsIR64_02g0038730.01"/>
    <property type="gene ID" value="OsIR64_02g0038730"/>
</dbReference>
<dbReference type="EnsemblPlants" id="OsKYG_02g0038930.01">
    <property type="protein sequence ID" value="OsKYG_02g0038930.01"/>
    <property type="gene ID" value="OsKYG_02g0038930"/>
</dbReference>
<dbReference type="EnsemblPlants" id="OsLaMu_02g0038740.01">
    <property type="protein sequence ID" value="OsLaMu_02g0038740.01"/>
    <property type="gene ID" value="OsLaMu_02g0038740"/>
</dbReference>
<dbReference type="EnsemblPlants" id="OsLima_02g0039000.01">
    <property type="protein sequence ID" value="OsLima_02g0039000.01"/>
    <property type="gene ID" value="OsLima_02g0039000"/>
</dbReference>
<dbReference type="EnsemblPlants" id="OsLiXu_02g0039080.01">
    <property type="protein sequence ID" value="OsLiXu_02g0039080.01"/>
    <property type="gene ID" value="OsLiXu_02g0039080"/>
</dbReference>
<dbReference type="EnsemblPlants" id="OsMH63_02G039320_02">
    <property type="protein sequence ID" value="OsMH63_02G039320_02"/>
    <property type="gene ID" value="OsMH63_02G039320"/>
</dbReference>
<dbReference type="EnsemblPlants" id="OsPr106_02g0039040.01">
    <property type="protein sequence ID" value="OsPr106_02g0039040.01"/>
    <property type="gene ID" value="OsPr106_02g0039040"/>
</dbReference>
<dbReference type="EnsemblPlants" id="OsZS97_02G038720_02">
    <property type="protein sequence ID" value="OsZS97_02G038720_02"/>
    <property type="gene ID" value="OsZS97_02G038720"/>
</dbReference>
<dbReference type="Gramene" id="BGIOSGA009335-TA">
    <property type="protein sequence ID" value="BGIOSGA009335-PA"/>
    <property type="gene ID" value="BGIOSGA009335"/>
</dbReference>
<dbReference type="Gramene" id="OsGoSa_02g0039070.01">
    <property type="protein sequence ID" value="OsGoSa_02g0039070.01"/>
    <property type="gene ID" value="OsGoSa_02g0039070"/>
</dbReference>
<dbReference type="Gramene" id="OsIR64_02g0038730.01">
    <property type="protein sequence ID" value="OsIR64_02g0038730.01"/>
    <property type="gene ID" value="OsIR64_02g0038730"/>
</dbReference>
<dbReference type="Gramene" id="OsKYG_02g0038930.01">
    <property type="protein sequence ID" value="OsKYG_02g0038930.01"/>
    <property type="gene ID" value="OsKYG_02g0038930"/>
</dbReference>
<dbReference type="Gramene" id="OsLaMu_02g0038740.01">
    <property type="protein sequence ID" value="OsLaMu_02g0038740.01"/>
    <property type="gene ID" value="OsLaMu_02g0038740"/>
</dbReference>
<dbReference type="Gramene" id="OsLima_02g0039000.01">
    <property type="protein sequence ID" value="OsLima_02g0039000.01"/>
    <property type="gene ID" value="OsLima_02g0039000"/>
</dbReference>
<dbReference type="Gramene" id="OsLiXu_02g0039080.01">
    <property type="protein sequence ID" value="OsLiXu_02g0039080.01"/>
    <property type="gene ID" value="OsLiXu_02g0039080"/>
</dbReference>
<dbReference type="Gramene" id="OsMH63_02G039320_02">
    <property type="protein sequence ID" value="OsMH63_02G039320_02"/>
    <property type="gene ID" value="OsMH63_02G039320"/>
</dbReference>
<dbReference type="Gramene" id="OsPr106_02g0039040.01">
    <property type="protein sequence ID" value="OsPr106_02g0039040.01"/>
    <property type="gene ID" value="OsPr106_02g0039040"/>
</dbReference>
<dbReference type="Gramene" id="OsZS97_02G038720_02">
    <property type="protein sequence ID" value="OsZS97_02G038720_02"/>
    <property type="gene ID" value="OsZS97_02G038720"/>
</dbReference>
<dbReference type="HOGENOM" id="CLU_025234_1_0_1"/>
<dbReference type="OMA" id="SQAFAMF"/>
<dbReference type="OrthoDB" id="28755at2759"/>
<dbReference type="UniPathway" id="UPA00238"/>
<dbReference type="Proteomes" id="UP000007015">
    <property type="component" value="Chromosome 2"/>
</dbReference>
<dbReference type="GO" id="GO:0005886">
    <property type="term" value="C:plasma membrane"/>
    <property type="evidence" value="ECO:0007669"/>
    <property type="project" value="UniProtKB-SubCell"/>
</dbReference>
<dbReference type="GO" id="GO:0090406">
    <property type="term" value="C:pollen tube"/>
    <property type="evidence" value="ECO:0007669"/>
    <property type="project" value="EnsemblPlants"/>
</dbReference>
<dbReference type="GO" id="GO:0008506">
    <property type="term" value="F:sucrose:proton symporter activity"/>
    <property type="evidence" value="ECO:0007669"/>
    <property type="project" value="TreeGrafter"/>
</dbReference>
<dbReference type="GO" id="GO:0009611">
    <property type="term" value="P:response to wounding"/>
    <property type="evidence" value="ECO:0007669"/>
    <property type="project" value="EnsemblPlants"/>
</dbReference>
<dbReference type="GO" id="GO:0005985">
    <property type="term" value="P:sucrose metabolic process"/>
    <property type="evidence" value="ECO:0007669"/>
    <property type="project" value="UniProtKB-UniPathway"/>
</dbReference>
<dbReference type="CDD" id="cd17313">
    <property type="entry name" value="MFS_SLC45_SUC"/>
    <property type="match status" value="1"/>
</dbReference>
<dbReference type="FunFam" id="1.20.1250.20:FF:000366">
    <property type="entry name" value="Sucrose transport protein SUT5"/>
    <property type="match status" value="1"/>
</dbReference>
<dbReference type="FunFam" id="1.20.1250.20:FF:000182">
    <property type="entry name" value="Sucrose transporter SUC2"/>
    <property type="match status" value="1"/>
</dbReference>
<dbReference type="Gene3D" id="1.20.1250.20">
    <property type="entry name" value="MFS general substrate transporter like domains"/>
    <property type="match status" value="1"/>
</dbReference>
<dbReference type="InterPro" id="IPR036259">
    <property type="entry name" value="MFS_trans_sf"/>
</dbReference>
<dbReference type="PANTHER" id="PTHR19432:SF35">
    <property type="entry name" value="SOLUTE CARRIER FAMILY 45 MEMBER 3 ISOFORM X1"/>
    <property type="match status" value="1"/>
</dbReference>
<dbReference type="PANTHER" id="PTHR19432">
    <property type="entry name" value="SUGAR TRANSPORTER"/>
    <property type="match status" value="1"/>
</dbReference>
<dbReference type="Pfam" id="PF13347">
    <property type="entry name" value="MFS_2"/>
    <property type="match status" value="1"/>
</dbReference>
<dbReference type="SUPFAM" id="SSF103473">
    <property type="entry name" value="MFS general substrate transporter"/>
    <property type="match status" value="1"/>
</dbReference>
<evidence type="ECO:0000250" key="1"/>
<evidence type="ECO:0000255" key="2"/>
<evidence type="ECO:0000256" key="3">
    <source>
        <dbReference type="SAM" id="MobiDB-lite"/>
    </source>
</evidence>
<evidence type="ECO:0000305" key="4"/>
<keyword id="KW-1003">Cell membrane</keyword>
<keyword id="KW-0325">Glycoprotein</keyword>
<keyword id="KW-0472">Membrane</keyword>
<keyword id="KW-1185">Reference proteome</keyword>
<keyword id="KW-0762">Sugar transport</keyword>
<keyword id="KW-0769">Symport</keyword>
<keyword id="KW-0812">Transmembrane</keyword>
<keyword id="KW-1133">Transmembrane helix</keyword>
<keyword id="KW-0813">Transport</keyword>
<comment type="function">
    <text evidence="1">Responsible for the transport of sucrose into the cell, with the concomitant uptake of protons (symport system). May also transport other glucosides (By similarity).</text>
</comment>
<comment type="pathway">
    <text>Glycan biosynthesis; sucrose metabolism.</text>
</comment>
<comment type="subunit">
    <text evidence="1">Homodimer.</text>
</comment>
<comment type="subcellular location">
    <subcellularLocation>
        <location evidence="4">Cell membrane</location>
        <topology evidence="4">Multi-pass membrane protein</topology>
    </subcellularLocation>
</comment>
<comment type="similarity">
    <text evidence="4">Belongs to the glycoside-pentoside-hexuronide (GPH) cation symporter transporter (TC 2.A.2.4) family.</text>
</comment>
<name>SUT4_ORYSI</name>
<gene>
    <name type="primary">SUT4</name>
    <name type="ORF">OsI_09532</name>
</gene>
<sequence>MDSAAGGGGLTAIRLPYRHLRDAEMELVSLNGGTPRGGSPKDPDATHQQGPPAARTTTTRKLVLACMVAAGVQFGWALQLSLLTPYIQTLGIDHAMASFIWLCGPITGFVVQPCVGVWSDKCRSKYGRRRPFILAGCLMICFAVTLIGFSADLGYILGDTTEHCSTYKGSRFRAAIIFVLGFWMLDLANNTVQGPARALLADLSGPDQCNSANAIFCTWMAVGNVLGFSSGASGNWHKWFPFLMTRACCEACSNLKAAFLVAVVFLLFCMSVTLYFAEEIPLEPTDAQRLSDSAPLLNGSRDDNNASNEPRNGALPNGHTDGSNVPANSNAEDSNSNRENVEVFNDGPGAVLVNILTSMRHLPPGMYSVLLVMALTWLSWFPFFLFDTDWMGREVYHGDPNGNLSERKAYDNGVREGAFGLLLNSVVLGIGSFLVDPLCRLMGARLVWAISNFTVFICMLATAILSWISFDLYSSKLHHIIGANKTVKNSALIVFSLLGLPLSITYSVPFSVTAELTAGTGGGQGLATGVLNLAIVVPQIVVSLGAGPWDALFGGGNVPAFALASVFSLGAGVLAVLKLPKLPNSYRSAGFHGFG</sequence>
<proteinExistence type="inferred from homology"/>
<organism>
    <name type="scientific">Oryza sativa subsp. indica</name>
    <name type="common">Rice</name>
    <dbReference type="NCBI Taxonomy" id="39946"/>
    <lineage>
        <taxon>Eukaryota</taxon>
        <taxon>Viridiplantae</taxon>
        <taxon>Streptophyta</taxon>
        <taxon>Embryophyta</taxon>
        <taxon>Tracheophyta</taxon>
        <taxon>Spermatophyta</taxon>
        <taxon>Magnoliopsida</taxon>
        <taxon>Liliopsida</taxon>
        <taxon>Poales</taxon>
        <taxon>Poaceae</taxon>
        <taxon>BOP clade</taxon>
        <taxon>Oryzoideae</taxon>
        <taxon>Oryzeae</taxon>
        <taxon>Oryzinae</taxon>
        <taxon>Oryza</taxon>
        <taxon>Oryza sativa</taxon>
    </lineage>
</organism>
<reference key="1">
    <citation type="journal article" date="2005" name="PLoS Biol.">
        <title>The genomes of Oryza sativa: a history of duplications.</title>
        <authorList>
            <person name="Yu J."/>
            <person name="Wang J."/>
            <person name="Lin W."/>
            <person name="Li S."/>
            <person name="Li H."/>
            <person name="Zhou J."/>
            <person name="Ni P."/>
            <person name="Dong W."/>
            <person name="Hu S."/>
            <person name="Zeng C."/>
            <person name="Zhang J."/>
            <person name="Zhang Y."/>
            <person name="Li R."/>
            <person name="Xu Z."/>
            <person name="Li S."/>
            <person name="Li X."/>
            <person name="Zheng H."/>
            <person name="Cong L."/>
            <person name="Lin L."/>
            <person name="Yin J."/>
            <person name="Geng J."/>
            <person name="Li G."/>
            <person name="Shi J."/>
            <person name="Liu J."/>
            <person name="Lv H."/>
            <person name="Li J."/>
            <person name="Wang J."/>
            <person name="Deng Y."/>
            <person name="Ran L."/>
            <person name="Shi X."/>
            <person name="Wang X."/>
            <person name="Wu Q."/>
            <person name="Li C."/>
            <person name="Ren X."/>
            <person name="Wang J."/>
            <person name="Wang X."/>
            <person name="Li D."/>
            <person name="Liu D."/>
            <person name="Zhang X."/>
            <person name="Ji Z."/>
            <person name="Zhao W."/>
            <person name="Sun Y."/>
            <person name="Zhang Z."/>
            <person name="Bao J."/>
            <person name="Han Y."/>
            <person name="Dong L."/>
            <person name="Ji J."/>
            <person name="Chen P."/>
            <person name="Wu S."/>
            <person name="Liu J."/>
            <person name="Xiao Y."/>
            <person name="Bu D."/>
            <person name="Tan J."/>
            <person name="Yang L."/>
            <person name="Ye C."/>
            <person name="Zhang J."/>
            <person name="Xu J."/>
            <person name="Zhou Y."/>
            <person name="Yu Y."/>
            <person name="Zhang B."/>
            <person name="Zhuang S."/>
            <person name="Wei H."/>
            <person name="Liu B."/>
            <person name="Lei M."/>
            <person name="Yu H."/>
            <person name="Li Y."/>
            <person name="Xu H."/>
            <person name="Wei S."/>
            <person name="He X."/>
            <person name="Fang L."/>
            <person name="Zhang Z."/>
            <person name="Zhang Y."/>
            <person name="Huang X."/>
            <person name="Su Z."/>
            <person name="Tong W."/>
            <person name="Li J."/>
            <person name="Tong Z."/>
            <person name="Li S."/>
            <person name="Ye J."/>
            <person name="Wang L."/>
            <person name="Fang L."/>
            <person name="Lei T."/>
            <person name="Chen C.-S."/>
            <person name="Chen H.-C."/>
            <person name="Xu Z."/>
            <person name="Li H."/>
            <person name="Huang H."/>
            <person name="Zhang F."/>
            <person name="Xu H."/>
            <person name="Li N."/>
            <person name="Zhao C."/>
            <person name="Li S."/>
            <person name="Dong L."/>
            <person name="Huang Y."/>
            <person name="Li L."/>
            <person name="Xi Y."/>
            <person name="Qi Q."/>
            <person name="Li W."/>
            <person name="Zhang B."/>
            <person name="Hu W."/>
            <person name="Zhang Y."/>
            <person name="Tian X."/>
            <person name="Jiao Y."/>
            <person name="Liang X."/>
            <person name="Jin J."/>
            <person name="Gao L."/>
            <person name="Zheng W."/>
            <person name="Hao B."/>
            <person name="Liu S.-M."/>
            <person name="Wang W."/>
            <person name="Yuan L."/>
            <person name="Cao M."/>
            <person name="McDermott J."/>
            <person name="Samudrala R."/>
            <person name="Wang J."/>
            <person name="Wong G.K.-S."/>
            <person name="Yang H."/>
        </authorList>
    </citation>
    <scope>NUCLEOTIDE SEQUENCE [LARGE SCALE GENOMIC DNA]</scope>
    <source>
        <strain>cv. 93-11</strain>
    </source>
</reference>
<feature type="chain" id="PRO_0000398192" description="Sucrose transport protein SUT4">
    <location>
        <begin position="1"/>
        <end position="595"/>
    </location>
</feature>
<feature type="topological domain" description="Cytoplasmic" evidence="2">
    <location>
        <begin position="1"/>
        <end position="61"/>
    </location>
</feature>
<feature type="transmembrane region" description="Helical" evidence="2">
    <location>
        <begin position="62"/>
        <end position="82"/>
    </location>
</feature>
<feature type="topological domain" description="Extracellular" evidence="2">
    <location>
        <begin position="83"/>
        <end position="97"/>
    </location>
</feature>
<feature type="transmembrane region" description="Helical" evidence="2">
    <location>
        <begin position="98"/>
        <end position="118"/>
    </location>
</feature>
<feature type="topological domain" description="Cytoplasmic" evidence="2">
    <location>
        <begin position="119"/>
        <end position="130"/>
    </location>
</feature>
<feature type="transmembrane region" description="Helical" evidence="2">
    <location>
        <begin position="131"/>
        <end position="151"/>
    </location>
</feature>
<feature type="topological domain" description="Extracellular" evidence="2">
    <location>
        <begin position="152"/>
        <end position="173"/>
    </location>
</feature>
<feature type="transmembrane region" description="Helical" evidence="2">
    <location>
        <begin position="174"/>
        <end position="194"/>
    </location>
</feature>
<feature type="topological domain" description="Cytoplasmic" evidence="2">
    <location>
        <begin position="195"/>
        <end position="213"/>
    </location>
</feature>
<feature type="transmembrane region" description="Helical" evidence="2">
    <location>
        <begin position="214"/>
        <end position="234"/>
    </location>
</feature>
<feature type="topological domain" description="Extracellular" evidence="2">
    <location>
        <begin position="235"/>
        <end position="256"/>
    </location>
</feature>
<feature type="transmembrane region" description="Helical" evidence="2">
    <location>
        <begin position="257"/>
        <end position="277"/>
    </location>
</feature>
<feature type="topological domain" description="Cytoplasmic" evidence="2">
    <location>
        <begin position="278"/>
        <end position="365"/>
    </location>
</feature>
<feature type="transmembrane region" description="Helical" evidence="2">
    <location>
        <begin position="366"/>
        <end position="386"/>
    </location>
</feature>
<feature type="topological domain" description="Extracellular" evidence="2">
    <location>
        <begin position="387"/>
        <end position="417"/>
    </location>
</feature>
<feature type="transmembrane region" description="Helical" evidence="2">
    <location>
        <begin position="418"/>
        <end position="438"/>
    </location>
</feature>
<feature type="topological domain" description="Cytoplasmic" evidence="2">
    <location>
        <begin position="439"/>
        <end position="447"/>
    </location>
</feature>
<feature type="transmembrane region" description="Helical" evidence="2">
    <location>
        <begin position="448"/>
        <end position="468"/>
    </location>
</feature>
<feature type="topological domain" description="Extracellular" evidence="2">
    <location>
        <begin position="469"/>
        <end position="491"/>
    </location>
</feature>
<feature type="transmembrane region" description="Helical" evidence="2">
    <location>
        <begin position="492"/>
        <end position="512"/>
    </location>
</feature>
<feature type="topological domain" description="Cytoplasmic" evidence="2">
    <location>
        <begin position="513"/>
        <end position="525"/>
    </location>
</feature>
<feature type="transmembrane region" description="Helical" evidence="2">
    <location>
        <begin position="526"/>
        <end position="546"/>
    </location>
</feature>
<feature type="topological domain" description="Extracellular" evidence="2">
    <location>
        <begin position="547"/>
        <end position="556"/>
    </location>
</feature>
<feature type="transmembrane region" description="Helical" evidence="2">
    <location>
        <begin position="557"/>
        <end position="577"/>
    </location>
</feature>
<feature type="topological domain" description="Cytoplasmic" evidence="2">
    <location>
        <begin position="578"/>
        <end position="595"/>
    </location>
</feature>
<feature type="region of interest" description="Disordered" evidence="3">
    <location>
        <begin position="29"/>
        <end position="55"/>
    </location>
</feature>
<feature type="region of interest" description="Disordered" evidence="3">
    <location>
        <begin position="291"/>
        <end position="340"/>
    </location>
</feature>
<feature type="compositionally biased region" description="Polar residues" evidence="3">
    <location>
        <begin position="320"/>
        <end position="334"/>
    </location>
</feature>
<feature type="glycosylation site" description="N-linked (GlcNAc...) asparagine" evidence="2">
    <location>
        <position position="403"/>
    </location>
</feature>
<feature type="glycosylation site" description="N-linked (GlcNAc...) asparagine" evidence="2">
    <location>
        <position position="484"/>
    </location>
</feature>